<keyword id="KW-0119">Carbohydrate metabolism</keyword>
<keyword id="KW-0963">Cytoplasm</keyword>
<keyword id="KW-0378">Hydrolase</keyword>
<keyword id="KW-0448">Lipopolysaccharide biosynthesis</keyword>
<keyword id="KW-0460">Magnesium</keyword>
<keyword id="KW-0479">Metal-binding</keyword>
<keyword id="KW-1185">Reference proteome</keyword>
<keyword id="KW-0862">Zinc</keyword>
<proteinExistence type="inferred from homology"/>
<protein>
    <recommendedName>
        <fullName>D-glycero-beta-D-manno-heptose-1,7-bisphosphate 7-phosphatase</fullName>
        <ecNumber>3.1.3.82</ecNumber>
    </recommendedName>
    <alternativeName>
        <fullName>D,D-heptose 1,7-bisphosphate phosphatase</fullName>
        <shortName>HBP phosphatase</shortName>
    </alternativeName>
</protein>
<organism>
    <name type="scientific">Escherichia coli O157:H7</name>
    <dbReference type="NCBI Taxonomy" id="83334"/>
    <lineage>
        <taxon>Bacteria</taxon>
        <taxon>Pseudomonadati</taxon>
        <taxon>Pseudomonadota</taxon>
        <taxon>Gammaproteobacteria</taxon>
        <taxon>Enterobacterales</taxon>
        <taxon>Enterobacteriaceae</taxon>
        <taxon>Escherichia</taxon>
    </lineage>
</organism>
<name>GMHBB_ECO57</name>
<accession>P63229</accession>
<accession>P31546</accession>
<dbReference type="EC" id="3.1.3.82"/>
<dbReference type="EMBL" id="AB035926">
    <property type="protein sequence ID" value="BAA93568.1"/>
    <property type="molecule type" value="Genomic_DNA"/>
</dbReference>
<dbReference type="EMBL" id="AE005174">
    <property type="protein sequence ID" value="AAG54502.1"/>
    <property type="molecule type" value="Genomic_DNA"/>
</dbReference>
<dbReference type="EMBL" id="BA000007">
    <property type="protein sequence ID" value="BAB33625.1"/>
    <property type="molecule type" value="Genomic_DNA"/>
</dbReference>
<dbReference type="PIR" id="B85505">
    <property type="entry name" value="B85505"/>
</dbReference>
<dbReference type="PIR" id="B90654">
    <property type="entry name" value="B90654"/>
</dbReference>
<dbReference type="RefSeq" id="NP_308229.1">
    <property type="nucleotide sequence ID" value="NC_002695.1"/>
</dbReference>
<dbReference type="RefSeq" id="WP_001140187.1">
    <property type="nucleotide sequence ID" value="NZ_VOAI01000002.1"/>
</dbReference>
<dbReference type="SMR" id="P63229"/>
<dbReference type="STRING" id="155864.Z0212"/>
<dbReference type="GeneID" id="913974"/>
<dbReference type="GeneID" id="93777223"/>
<dbReference type="KEGG" id="ece:Z0212"/>
<dbReference type="KEGG" id="ecs:ECs_0202"/>
<dbReference type="PATRIC" id="fig|386585.9.peg.306"/>
<dbReference type="eggNOG" id="COG0241">
    <property type="taxonomic scope" value="Bacteria"/>
</dbReference>
<dbReference type="HOGENOM" id="CLU_085077_3_0_6"/>
<dbReference type="OMA" id="FMIGDKE"/>
<dbReference type="UniPathway" id="UPA00356">
    <property type="reaction ID" value="UER00438"/>
</dbReference>
<dbReference type="UniPathway" id="UPA00958"/>
<dbReference type="Proteomes" id="UP000000558">
    <property type="component" value="Chromosome"/>
</dbReference>
<dbReference type="Proteomes" id="UP000002519">
    <property type="component" value="Chromosome"/>
</dbReference>
<dbReference type="GO" id="GO:0005737">
    <property type="term" value="C:cytoplasm"/>
    <property type="evidence" value="ECO:0007669"/>
    <property type="project" value="UniProtKB-SubCell"/>
</dbReference>
<dbReference type="GO" id="GO:0034200">
    <property type="term" value="F:D-glycero-beta-D-manno-heptose 1,7-bisphosphate 7-phosphatase activity"/>
    <property type="evidence" value="ECO:0000250"/>
    <property type="project" value="UniProtKB"/>
</dbReference>
<dbReference type="GO" id="GO:0000287">
    <property type="term" value="F:magnesium ion binding"/>
    <property type="evidence" value="ECO:0000250"/>
    <property type="project" value="UniProtKB"/>
</dbReference>
<dbReference type="GO" id="GO:0008270">
    <property type="term" value="F:zinc ion binding"/>
    <property type="evidence" value="ECO:0000250"/>
    <property type="project" value="UniProtKB"/>
</dbReference>
<dbReference type="GO" id="GO:0097171">
    <property type="term" value="P:ADP-L-glycero-beta-D-manno-heptose biosynthetic process"/>
    <property type="evidence" value="ECO:0007669"/>
    <property type="project" value="UniProtKB-UniPathway"/>
</dbReference>
<dbReference type="GO" id="GO:0009244">
    <property type="term" value="P:lipopolysaccharide core region biosynthetic process"/>
    <property type="evidence" value="ECO:0007669"/>
    <property type="project" value="UniProtKB-UniPathway"/>
</dbReference>
<dbReference type="CDD" id="cd07503">
    <property type="entry name" value="HAD_HisB-N"/>
    <property type="match status" value="1"/>
</dbReference>
<dbReference type="FunFam" id="3.40.50.1000:FF:000037">
    <property type="entry name" value="D,D-heptose 1,7-bisphosphate phosphatase"/>
    <property type="match status" value="1"/>
</dbReference>
<dbReference type="Gene3D" id="3.40.50.1000">
    <property type="entry name" value="HAD superfamily/HAD-like"/>
    <property type="match status" value="1"/>
</dbReference>
<dbReference type="InterPro" id="IPR036412">
    <property type="entry name" value="HAD-like_sf"/>
</dbReference>
<dbReference type="InterPro" id="IPR006549">
    <property type="entry name" value="HAD-SF_hydro_IIIA"/>
</dbReference>
<dbReference type="InterPro" id="IPR023214">
    <property type="entry name" value="HAD_sf"/>
</dbReference>
<dbReference type="InterPro" id="IPR004446">
    <property type="entry name" value="Heptose_bisP_phosphatase"/>
</dbReference>
<dbReference type="InterPro" id="IPR006543">
    <property type="entry name" value="Histidinol-phos"/>
</dbReference>
<dbReference type="NCBIfam" id="TIGR00213">
    <property type="entry name" value="GmhB_yaeD"/>
    <property type="match status" value="1"/>
</dbReference>
<dbReference type="NCBIfam" id="TIGR01662">
    <property type="entry name" value="HAD-SF-IIIA"/>
    <property type="match status" value="1"/>
</dbReference>
<dbReference type="NCBIfam" id="TIGR01656">
    <property type="entry name" value="Histidinol-ppas"/>
    <property type="match status" value="1"/>
</dbReference>
<dbReference type="NCBIfam" id="NF006506">
    <property type="entry name" value="PRK08942.1"/>
    <property type="match status" value="1"/>
</dbReference>
<dbReference type="PANTHER" id="PTHR42891">
    <property type="entry name" value="D-GLYCERO-BETA-D-MANNO-HEPTOSE-1,7-BISPHOSPHATE 7-PHOSPHATASE"/>
    <property type="match status" value="1"/>
</dbReference>
<dbReference type="PANTHER" id="PTHR42891:SF1">
    <property type="entry name" value="D-GLYCERO-BETA-D-MANNO-HEPTOSE-1,7-BISPHOSPHATE 7-PHOSPHATASE"/>
    <property type="match status" value="1"/>
</dbReference>
<dbReference type="Pfam" id="PF13242">
    <property type="entry name" value="Hydrolase_like"/>
    <property type="match status" value="1"/>
</dbReference>
<dbReference type="PIRSF" id="PIRSF004682">
    <property type="entry name" value="GmhB"/>
    <property type="match status" value="1"/>
</dbReference>
<dbReference type="SFLD" id="SFLDG01134">
    <property type="entry name" value="C1.5.5:_Heptose_Bisphosphate_P"/>
    <property type="match status" value="1"/>
</dbReference>
<dbReference type="SFLD" id="SFLDS00003">
    <property type="entry name" value="Haloacid_Dehalogenase"/>
    <property type="match status" value="1"/>
</dbReference>
<dbReference type="SUPFAM" id="SSF56784">
    <property type="entry name" value="HAD-like"/>
    <property type="match status" value="1"/>
</dbReference>
<sequence length="191" mass="21294">MAKSVPAIFLDRDGTINVDHGYVHEIDNFEFIDGVIDAMRELKKMGFALVVVTNQSGIARGKFTEAQFETLTEWMDWSLADRDVDLDGIYYCPHHPQGSVEEFRQVCDCRKPHPGMLLSARDYLHIDMAASYMVGDKLEDMQAAVAANVGTKVLVRTGKPITPEAENAADWVLNSLADLPQAIKKQQKPAQ</sequence>
<feature type="chain" id="PRO_0000209390" description="D-glycero-beta-D-manno-heptose-1,7-bisphosphate 7-phosphatase">
    <location>
        <begin position="1"/>
        <end position="191"/>
    </location>
</feature>
<feature type="active site" description="Nucleophile" evidence="1">
    <location>
        <position position="11"/>
    </location>
</feature>
<feature type="active site" description="Proton donor" evidence="1">
    <location>
        <position position="13"/>
    </location>
</feature>
<feature type="binding site" evidence="1">
    <location>
        <begin position="11"/>
        <end position="13"/>
    </location>
    <ligand>
        <name>substrate</name>
    </ligand>
</feature>
<feature type="binding site" evidence="1">
    <location>
        <position position="11"/>
    </location>
    <ligand>
        <name>Mg(2+)</name>
        <dbReference type="ChEBI" id="CHEBI:18420"/>
    </ligand>
</feature>
<feature type="binding site" evidence="1">
    <location>
        <position position="13"/>
    </location>
    <ligand>
        <name>Mg(2+)</name>
        <dbReference type="ChEBI" id="CHEBI:18420"/>
    </ligand>
</feature>
<feature type="binding site" evidence="1">
    <location>
        <begin position="19"/>
        <end position="22"/>
    </location>
    <ligand>
        <name>substrate</name>
    </ligand>
</feature>
<feature type="binding site" evidence="1">
    <location>
        <begin position="53"/>
        <end position="56"/>
    </location>
    <ligand>
        <name>substrate</name>
    </ligand>
</feature>
<feature type="binding site" evidence="2">
    <location>
        <position position="92"/>
    </location>
    <ligand>
        <name>Zn(2+)</name>
        <dbReference type="ChEBI" id="CHEBI:29105"/>
    </ligand>
</feature>
<feature type="binding site" evidence="2">
    <location>
        <position position="94"/>
    </location>
    <ligand>
        <name>Zn(2+)</name>
        <dbReference type="ChEBI" id="CHEBI:29105"/>
    </ligand>
</feature>
<feature type="binding site" evidence="2">
    <location>
        <position position="107"/>
    </location>
    <ligand>
        <name>Zn(2+)</name>
        <dbReference type="ChEBI" id="CHEBI:29105"/>
    </ligand>
</feature>
<feature type="binding site" evidence="2">
    <location>
        <position position="109"/>
    </location>
    <ligand>
        <name>Zn(2+)</name>
        <dbReference type="ChEBI" id="CHEBI:29105"/>
    </ligand>
</feature>
<feature type="binding site" evidence="1">
    <location>
        <begin position="110"/>
        <end position="111"/>
    </location>
    <ligand>
        <name>substrate</name>
    </ligand>
</feature>
<feature type="binding site" evidence="1">
    <location>
        <position position="136"/>
    </location>
    <ligand>
        <name>Mg(2+)</name>
        <dbReference type="ChEBI" id="CHEBI:18420"/>
    </ligand>
</feature>
<feature type="binding site" evidence="1">
    <location>
        <position position="137"/>
    </location>
    <ligand>
        <name>Mg(2+)</name>
        <dbReference type="ChEBI" id="CHEBI:18420"/>
    </ligand>
</feature>
<feature type="binding site" evidence="1">
    <location>
        <position position="137"/>
    </location>
    <ligand>
        <name>substrate</name>
    </ligand>
</feature>
<feature type="site" description="Stabilizes the phosphoryl group" evidence="1">
    <location>
        <position position="53"/>
    </location>
</feature>
<feature type="site" description="Contributes to substrate recognition" evidence="1">
    <location>
        <position position="110"/>
    </location>
</feature>
<feature type="site" description="Stabilizes the phosphoryl group" evidence="1">
    <location>
        <position position="111"/>
    </location>
</feature>
<reference key="1">
    <citation type="journal article" date="2000" name="Syst. Appl. Microbiol.">
        <title>Comparative analysis of the whole set of rRNA operons between an enterohemorrhagic Escherichia coli O157:H7 Sakai strain and an Escherichia coli K-12 strain MG1655.</title>
        <authorList>
            <person name="Ohnishi M."/>
            <person name="Murata T."/>
            <person name="Nakayama K."/>
            <person name="Kuhara S."/>
            <person name="Hattori M."/>
            <person name="Kurokawa K."/>
            <person name="Yasunaga T."/>
            <person name="Yokoyama K."/>
            <person name="Makino K."/>
            <person name="Shinagawa H."/>
            <person name="Hayashi T."/>
        </authorList>
    </citation>
    <scope>NUCLEOTIDE SEQUENCE [GENOMIC DNA]</scope>
    <source>
        <strain>O157:H7 / Sakai / RIMD 0509952 / EHEC</strain>
    </source>
</reference>
<reference key="2">
    <citation type="journal article" date="2001" name="Nature">
        <title>Genome sequence of enterohaemorrhagic Escherichia coli O157:H7.</title>
        <authorList>
            <person name="Perna N.T."/>
            <person name="Plunkett G. III"/>
            <person name="Burland V."/>
            <person name="Mau B."/>
            <person name="Glasner J.D."/>
            <person name="Rose D.J."/>
            <person name="Mayhew G.F."/>
            <person name="Evans P.S."/>
            <person name="Gregor J."/>
            <person name="Kirkpatrick H.A."/>
            <person name="Posfai G."/>
            <person name="Hackett J."/>
            <person name="Klink S."/>
            <person name="Boutin A."/>
            <person name="Shao Y."/>
            <person name="Miller L."/>
            <person name="Grotbeck E.J."/>
            <person name="Davis N.W."/>
            <person name="Lim A."/>
            <person name="Dimalanta E.T."/>
            <person name="Potamousis K."/>
            <person name="Apodaca J."/>
            <person name="Anantharaman T.S."/>
            <person name="Lin J."/>
            <person name="Yen G."/>
            <person name="Schwartz D.C."/>
            <person name="Welch R.A."/>
            <person name="Blattner F.R."/>
        </authorList>
    </citation>
    <scope>NUCLEOTIDE SEQUENCE [LARGE SCALE GENOMIC DNA]</scope>
    <source>
        <strain>O157:H7 / EDL933 / ATCC 700927 / EHEC</strain>
    </source>
</reference>
<reference key="3">
    <citation type="journal article" date="2001" name="DNA Res.">
        <title>Complete genome sequence of enterohemorrhagic Escherichia coli O157:H7 and genomic comparison with a laboratory strain K-12.</title>
        <authorList>
            <person name="Hayashi T."/>
            <person name="Makino K."/>
            <person name="Ohnishi M."/>
            <person name="Kurokawa K."/>
            <person name="Ishii K."/>
            <person name="Yokoyama K."/>
            <person name="Han C.-G."/>
            <person name="Ohtsubo E."/>
            <person name="Nakayama K."/>
            <person name="Murata T."/>
            <person name="Tanaka M."/>
            <person name="Tobe T."/>
            <person name="Iida T."/>
            <person name="Takami H."/>
            <person name="Honda T."/>
            <person name="Sasakawa C."/>
            <person name="Ogasawara N."/>
            <person name="Yasunaga T."/>
            <person name="Kuhara S."/>
            <person name="Shiba T."/>
            <person name="Hattori M."/>
            <person name="Shinagawa H."/>
        </authorList>
    </citation>
    <scope>NUCLEOTIDE SEQUENCE [LARGE SCALE GENOMIC DNA]</scope>
    <source>
        <strain>O157:H7 / Sakai / RIMD 0509952 / EHEC</strain>
    </source>
</reference>
<evidence type="ECO:0000250" key="1"/>
<evidence type="ECO:0000250" key="2">
    <source>
        <dbReference type="UniProtKB" id="Q7WG29"/>
    </source>
</evidence>
<evidence type="ECO:0000305" key="3"/>
<comment type="function">
    <text evidence="1">Converts the D-glycero-beta-D-manno-heptose 1,7-bisphosphate intermediate into D-glycero-beta-D-manno-heptose 1-phosphate by removing the phosphate group at the C-7 position.</text>
</comment>
<comment type="catalytic activity">
    <reaction>
        <text>D-glycero-beta-D-manno-heptose 1,7-bisphosphate + H2O = D-glycero-beta-D-manno-heptose 1-phosphate + phosphate</text>
        <dbReference type="Rhea" id="RHEA:28518"/>
        <dbReference type="ChEBI" id="CHEBI:15377"/>
        <dbReference type="ChEBI" id="CHEBI:43474"/>
        <dbReference type="ChEBI" id="CHEBI:60208"/>
        <dbReference type="ChEBI" id="CHEBI:61593"/>
        <dbReference type="EC" id="3.1.3.82"/>
    </reaction>
</comment>
<comment type="cofactor">
    <cofactor evidence="1">
        <name>Mg(2+)</name>
        <dbReference type="ChEBI" id="CHEBI:18420"/>
    </cofactor>
</comment>
<comment type="cofactor">
    <cofactor evidence="1">
        <name>Zn(2+)</name>
        <dbReference type="ChEBI" id="CHEBI:29105"/>
    </cofactor>
</comment>
<comment type="pathway">
    <text>Nucleotide-sugar biosynthesis; ADP-L-glycero-beta-D-manno-heptose biosynthesis; ADP-L-glycero-beta-D-manno-heptose from D-glycero-beta-D-manno-heptose 7-phosphate: step 2/4.</text>
</comment>
<comment type="pathway">
    <text>Bacterial outer membrane biogenesis; LPS core biosynthesis.</text>
</comment>
<comment type="subunit">
    <text evidence="1">Monomer.</text>
</comment>
<comment type="subcellular location">
    <subcellularLocation>
        <location evidence="1">Cytoplasm</location>
    </subcellularLocation>
</comment>
<comment type="similarity">
    <text evidence="3">Belongs to the GmhB family.</text>
</comment>
<gene>
    <name type="primary">gmhB</name>
    <name type="ordered locus">Z0212</name>
    <name type="ordered locus">ECs0202</name>
</gene>